<proteinExistence type="inferred from homology"/>
<reference key="1">
    <citation type="journal article" date="2001" name="Nature">
        <title>Complete genome sequence of a multiple drug resistant Salmonella enterica serovar Typhi CT18.</title>
        <authorList>
            <person name="Parkhill J."/>
            <person name="Dougan G."/>
            <person name="James K.D."/>
            <person name="Thomson N.R."/>
            <person name="Pickard D."/>
            <person name="Wain J."/>
            <person name="Churcher C.M."/>
            <person name="Mungall K.L."/>
            <person name="Bentley S.D."/>
            <person name="Holden M.T.G."/>
            <person name="Sebaihia M."/>
            <person name="Baker S."/>
            <person name="Basham D."/>
            <person name="Brooks K."/>
            <person name="Chillingworth T."/>
            <person name="Connerton P."/>
            <person name="Cronin A."/>
            <person name="Davis P."/>
            <person name="Davies R.M."/>
            <person name="Dowd L."/>
            <person name="White N."/>
            <person name="Farrar J."/>
            <person name="Feltwell T."/>
            <person name="Hamlin N."/>
            <person name="Haque A."/>
            <person name="Hien T.T."/>
            <person name="Holroyd S."/>
            <person name="Jagels K."/>
            <person name="Krogh A."/>
            <person name="Larsen T.S."/>
            <person name="Leather S."/>
            <person name="Moule S."/>
            <person name="O'Gaora P."/>
            <person name="Parry C."/>
            <person name="Quail M.A."/>
            <person name="Rutherford K.M."/>
            <person name="Simmonds M."/>
            <person name="Skelton J."/>
            <person name="Stevens K."/>
            <person name="Whitehead S."/>
            <person name="Barrell B.G."/>
        </authorList>
    </citation>
    <scope>NUCLEOTIDE SEQUENCE [LARGE SCALE GENOMIC DNA]</scope>
    <source>
        <strain>CT18</strain>
    </source>
</reference>
<protein>
    <recommendedName>
        <fullName evidence="1">Mercuric transport protein periplasmic component</fullName>
    </recommendedName>
    <alternativeName>
        <fullName evidence="1">Mercury scavenger protein</fullName>
    </alternativeName>
    <alternativeName>
        <fullName evidence="1">Periplasmic mercury ion-binding protein</fullName>
    </alternativeName>
</protein>
<keyword id="KW-0475">Mercuric resistance</keyword>
<keyword id="KW-0476">Mercury</keyword>
<keyword id="KW-0479">Metal-binding</keyword>
<keyword id="KW-0574">Periplasm</keyword>
<keyword id="KW-0614">Plasmid</keyword>
<keyword id="KW-0732">Signal</keyword>
<sequence length="91" mass="9611">MKKLFAALALAAVVAPVWAATQTVTLSVPGMTCASCPITVKHALSKVEGVSKTDVSFDKRQAVVTFDDAKTNVQKLTKATEDAGYPSSLKR</sequence>
<evidence type="ECO:0000250" key="1">
    <source>
        <dbReference type="UniProtKB" id="P04129"/>
    </source>
</evidence>
<evidence type="ECO:0000250" key="2">
    <source>
        <dbReference type="UniProtKB" id="P13113"/>
    </source>
</evidence>
<evidence type="ECO:0000255" key="3"/>
<evidence type="ECO:0000255" key="4">
    <source>
        <dbReference type="PROSITE-ProRule" id="PRU00280"/>
    </source>
</evidence>
<evidence type="ECO:0000305" key="5"/>
<geneLocation type="plasmid">
    <name>pHCM1</name>
</geneLocation>
<name>MERP_SALTI</name>
<comment type="function">
    <text evidence="1">Involved in mercury resistance. Acts as a mercury scavenger that specifically binds to a mercuric ion in the periplasm and probably passes it to the cytoplasmic mercuric reductase MerA via the mercuric transport protein MerT.</text>
</comment>
<comment type="subunit">
    <text evidence="2">Monomer.</text>
</comment>
<comment type="subcellular location">
    <subcellularLocation>
        <location evidence="2">Periplasm</location>
    </subcellularLocation>
</comment>
<comment type="similarity">
    <text evidence="5">Belongs to the MerP family.</text>
</comment>
<organism>
    <name type="scientific">Salmonella typhi</name>
    <dbReference type="NCBI Taxonomy" id="90370"/>
    <lineage>
        <taxon>Bacteria</taxon>
        <taxon>Pseudomonadati</taxon>
        <taxon>Pseudomonadota</taxon>
        <taxon>Gammaproteobacteria</taxon>
        <taxon>Enterobacterales</taxon>
        <taxon>Enterobacteriaceae</taxon>
        <taxon>Salmonella</taxon>
    </lineage>
</organism>
<dbReference type="EMBL" id="AL513383">
    <property type="protein sequence ID" value="CAD09748.1"/>
    <property type="molecule type" value="Genomic_DNA"/>
</dbReference>
<dbReference type="RefSeq" id="NP_569362.1">
    <property type="nucleotide sequence ID" value="NC_003384.1"/>
</dbReference>
<dbReference type="SMR" id="P0A216"/>
<dbReference type="KEGG" id="sty:HCM1.153"/>
<dbReference type="PATRIC" id="fig|220341.7.peg.5190"/>
<dbReference type="HOGENOM" id="CLU_134973_2_1_6"/>
<dbReference type="OMA" id="EKCAANI"/>
<dbReference type="Proteomes" id="UP000000541">
    <property type="component" value="Plasmid pHCM1"/>
</dbReference>
<dbReference type="GO" id="GO:0042597">
    <property type="term" value="C:periplasmic space"/>
    <property type="evidence" value="ECO:0007669"/>
    <property type="project" value="UniProtKB-SubCell"/>
</dbReference>
<dbReference type="GO" id="GO:0045340">
    <property type="term" value="F:mercury ion binding"/>
    <property type="evidence" value="ECO:0007669"/>
    <property type="project" value="InterPro"/>
</dbReference>
<dbReference type="GO" id="GO:0015097">
    <property type="term" value="F:mercury ion transmembrane transporter activity"/>
    <property type="evidence" value="ECO:0007669"/>
    <property type="project" value="InterPro"/>
</dbReference>
<dbReference type="CDD" id="cd00371">
    <property type="entry name" value="HMA"/>
    <property type="match status" value="1"/>
</dbReference>
<dbReference type="FunFam" id="3.30.70.100:FF:000005">
    <property type="entry name" value="Copper-exporting P-type ATPase A"/>
    <property type="match status" value="1"/>
</dbReference>
<dbReference type="Gene3D" id="3.30.70.100">
    <property type="match status" value="1"/>
</dbReference>
<dbReference type="InterPro" id="IPR017969">
    <property type="entry name" value="Heavy-metal-associated_CS"/>
</dbReference>
<dbReference type="InterPro" id="IPR006121">
    <property type="entry name" value="HMA_dom"/>
</dbReference>
<dbReference type="InterPro" id="IPR036163">
    <property type="entry name" value="HMA_dom_sf"/>
</dbReference>
<dbReference type="InterPro" id="IPR011795">
    <property type="entry name" value="MerP"/>
</dbReference>
<dbReference type="InterPro" id="IPR001802">
    <property type="entry name" value="MerP/CopZ"/>
</dbReference>
<dbReference type="NCBIfam" id="TIGR02052">
    <property type="entry name" value="MerP"/>
    <property type="match status" value="1"/>
</dbReference>
<dbReference type="PANTHER" id="PTHR46594">
    <property type="entry name" value="P-TYPE CATION-TRANSPORTING ATPASE"/>
    <property type="match status" value="1"/>
</dbReference>
<dbReference type="PANTHER" id="PTHR46594:SF4">
    <property type="entry name" value="P-TYPE CATION-TRANSPORTING ATPASE"/>
    <property type="match status" value="1"/>
</dbReference>
<dbReference type="Pfam" id="PF00403">
    <property type="entry name" value="HMA"/>
    <property type="match status" value="1"/>
</dbReference>
<dbReference type="PRINTS" id="PR00946">
    <property type="entry name" value="HGSCAVENGER"/>
</dbReference>
<dbReference type="SUPFAM" id="SSF55008">
    <property type="entry name" value="HMA, heavy metal-associated domain"/>
    <property type="match status" value="1"/>
</dbReference>
<dbReference type="PROSITE" id="PS01047">
    <property type="entry name" value="HMA_1"/>
    <property type="match status" value="1"/>
</dbReference>
<dbReference type="PROSITE" id="PS50846">
    <property type="entry name" value="HMA_2"/>
    <property type="match status" value="1"/>
</dbReference>
<gene>
    <name type="primary">merP</name>
    <name type="ordered locus">HCM1.153</name>
</gene>
<accession>P0A216</accession>
<accession>O08125</accession>
<accession>P94701</accession>
<feature type="signal peptide" evidence="3">
    <location>
        <begin position="1"/>
        <end position="19"/>
    </location>
</feature>
<feature type="chain" id="PRO_0000021676" description="Mercuric transport protein periplasmic component">
    <location>
        <begin position="20"/>
        <end position="91"/>
    </location>
</feature>
<feature type="domain" description="HMA" evidence="4">
    <location>
        <begin position="22"/>
        <end position="88"/>
    </location>
</feature>
<feature type="binding site" evidence="4">
    <location>
        <position position="33"/>
    </location>
    <ligand>
        <name>Hg(2+)</name>
        <dbReference type="ChEBI" id="CHEBI:16793"/>
    </ligand>
</feature>
<feature type="binding site" evidence="4">
    <location>
        <position position="36"/>
    </location>
    <ligand>
        <name>Hg(2+)</name>
        <dbReference type="ChEBI" id="CHEBI:16793"/>
    </ligand>
</feature>